<dbReference type="EMBL" id="AL939124">
    <property type="protein sequence ID" value="CAD55362.1"/>
    <property type="molecule type" value="Genomic_DNA"/>
</dbReference>
<dbReference type="PIR" id="T35989">
    <property type="entry name" value="T35989"/>
</dbReference>
<dbReference type="RefSeq" id="NP_733671.1">
    <property type="nucleotide sequence ID" value="NC_003888.3"/>
</dbReference>
<dbReference type="RefSeq" id="WP_011030402.1">
    <property type="nucleotide sequence ID" value="NZ_VNID01000024.1"/>
</dbReference>
<dbReference type="SMR" id="Q8CJQ8"/>
<dbReference type="FunCoup" id="Q8CJQ8">
    <property type="interactions" value="402"/>
</dbReference>
<dbReference type="STRING" id="100226.gene:17763362"/>
<dbReference type="PaxDb" id="100226-SCO5706"/>
<dbReference type="KEGG" id="sco:SCO5706"/>
<dbReference type="PATRIC" id="fig|100226.15.peg.5795"/>
<dbReference type="eggNOG" id="COG0532">
    <property type="taxonomic scope" value="Bacteria"/>
</dbReference>
<dbReference type="HOGENOM" id="CLU_006301_9_3_11"/>
<dbReference type="InParanoid" id="Q8CJQ8"/>
<dbReference type="OrthoDB" id="9811804at2"/>
<dbReference type="PhylomeDB" id="Q8CJQ8"/>
<dbReference type="Proteomes" id="UP000001973">
    <property type="component" value="Chromosome"/>
</dbReference>
<dbReference type="GO" id="GO:0005737">
    <property type="term" value="C:cytoplasm"/>
    <property type="evidence" value="ECO:0000318"/>
    <property type="project" value="GO_Central"/>
</dbReference>
<dbReference type="GO" id="GO:0005829">
    <property type="term" value="C:cytosol"/>
    <property type="evidence" value="ECO:0000318"/>
    <property type="project" value="GO_Central"/>
</dbReference>
<dbReference type="GO" id="GO:0005525">
    <property type="term" value="F:GTP binding"/>
    <property type="evidence" value="ECO:0007669"/>
    <property type="project" value="UniProtKB-KW"/>
</dbReference>
<dbReference type="GO" id="GO:0003924">
    <property type="term" value="F:GTPase activity"/>
    <property type="evidence" value="ECO:0007669"/>
    <property type="project" value="UniProtKB-UniRule"/>
</dbReference>
<dbReference type="GO" id="GO:0003743">
    <property type="term" value="F:translation initiation factor activity"/>
    <property type="evidence" value="ECO:0000318"/>
    <property type="project" value="GO_Central"/>
</dbReference>
<dbReference type="GO" id="GO:0006413">
    <property type="term" value="P:translational initiation"/>
    <property type="evidence" value="ECO:0000318"/>
    <property type="project" value="GO_Central"/>
</dbReference>
<dbReference type="CDD" id="cd01887">
    <property type="entry name" value="IF2_eIF5B"/>
    <property type="match status" value="1"/>
</dbReference>
<dbReference type="CDD" id="cd03702">
    <property type="entry name" value="IF2_mtIF2_II"/>
    <property type="match status" value="1"/>
</dbReference>
<dbReference type="CDD" id="cd03692">
    <property type="entry name" value="mtIF2_IVc"/>
    <property type="match status" value="1"/>
</dbReference>
<dbReference type="FunFam" id="1.10.10.2480:FF:000003">
    <property type="entry name" value="Translation initiation factor IF-2"/>
    <property type="match status" value="1"/>
</dbReference>
<dbReference type="FunFam" id="2.40.30.10:FF:000007">
    <property type="entry name" value="Translation initiation factor IF-2"/>
    <property type="match status" value="1"/>
</dbReference>
<dbReference type="FunFam" id="2.40.30.10:FF:000008">
    <property type="entry name" value="Translation initiation factor IF-2"/>
    <property type="match status" value="1"/>
</dbReference>
<dbReference type="FunFam" id="3.40.50.10050:FF:000001">
    <property type="entry name" value="Translation initiation factor IF-2"/>
    <property type="match status" value="1"/>
</dbReference>
<dbReference type="FunFam" id="3.40.50.300:FF:000019">
    <property type="entry name" value="Translation initiation factor IF-2"/>
    <property type="match status" value="1"/>
</dbReference>
<dbReference type="Gene3D" id="1.10.10.2480">
    <property type="match status" value="1"/>
</dbReference>
<dbReference type="Gene3D" id="3.40.50.300">
    <property type="entry name" value="P-loop containing nucleotide triphosphate hydrolases"/>
    <property type="match status" value="1"/>
</dbReference>
<dbReference type="Gene3D" id="2.40.30.10">
    <property type="entry name" value="Translation factors"/>
    <property type="match status" value="2"/>
</dbReference>
<dbReference type="Gene3D" id="3.40.50.10050">
    <property type="entry name" value="Translation initiation factor IF- 2, domain 3"/>
    <property type="match status" value="1"/>
</dbReference>
<dbReference type="HAMAP" id="MF_00100_B">
    <property type="entry name" value="IF_2_B"/>
    <property type="match status" value="1"/>
</dbReference>
<dbReference type="InterPro" id="IPR053905">
    <property type="entry name" value="EF-G-like_DII"/>
</dbReference>
<dbReference type="InterPro" id="IPR044145">
    <property type="entry name" value="IF2_II"/>
</dbReference>
<dbReference type="InterPro" id="IPR006847">
    <property type="entry name" value="IF2_N"/>
</dbReference>
<dbReference type="InterPro" id="IPR027417">
    <property type="entry name" value="P-loop_NTPase"/>
</dbReference>
<dbReference type="InterPro" id="IPR005225">
    <property type="entry name" value="Small_GTP-bd"/>
</dbReference>
<dbReference type="InterPro" id="IPR000795">
    <property type="entry name" value="T_Tr_GTP-bd_dom"/>
</dbReference>
<dbReference type="InterPro" id="IPR000178">
    <property type="entry name" value="TF_IF2_bacterial-like"/>
</dbReference>
<dbReference type="InterPro" id="IPR015760">
    <property type="entry name" value="TIF_IF2"/>
</dbReference>
<dbReference type="InterPro" id="IPR023115">
    <property type="entry name" value="TIF_IF2_dom3"/>
</dbReference>
<dbReference type="InterPro" id="IPR036925">
    <property type="entry name" value="TIF_IF2_dom3_sf"/>
</dbReference>
<dbReference type="InterPro" id="IPR009000">
    <property type="entry name" value="Transl_B-barrel_sf"/>
</dbReference>
<dbReference type="NCBIfam" id="TIGR00487">
    <property type="entry name" value="IF-2"/>
    <property type="match status" value="1"/>
</dbReference>
<dbReference type="NCBIfam" id="TIGR00231">
    <property type="entry name" value="small_GTP"/>
    <property type="match status" value="1"/>
</dbReference>
<dbReference type="PANTHER" id="PTHR43381:SF5">
    <property type="entry name" value="TR-TYPE G DOMAIN-CONTAINING PROTEIN"/>
    <property type="match status" value="1"/>
</dbReference>
<dbReference type="PANTHER" id="PTHR43381">
    <property type="entry name" value="TRANSLATION INITIATION FACTOR IF-2-RELATED"/>
    <property type="match status" value="1"/>
</dbReference>
<dbReference type="Pfam" id="PF22042">
    <property type="entry name" value="EF-G_D2"/>
    <property type="match status" value="1"/>
</dbReference>
<dbReference type="Pfam" id="PF00009">
    <property type="entry name" value="GTP_EFTU"/>
    <property type="match status" value="1"/>
</dbReference>
<dbReference type="Pfam" id="PF11987">
    <property type="entry name" value="IF-2"/>
    <property type="match status" value="1"/>
</dbReference>
<dbReference type="Pfam" id="PF04760">
    <property type="entry name" value="IF2_N"/>
    <property type="match status" value="2"/>
</dbReference>
<dbReference type="PRINTS" id="PR00315">
    <property type="entry name" value="ELONGATNFCT"/>
</dbReference>
<dbReference type="SUPFAM" id="SSF52156">
    <property type="entry name" value="Initiation factor IF2/eIF5b, domain 3"/>
    <property type="match status" value="1"/>
</dbReference>
<dbReference type="SUPFAM" id="SSF52540">
    <property type="entry name" value="P-loop containing nucleoside triphosphate hydrolases"/>
    <property type="match status" value="1"/>
</dbReference>
<dbReference type="SUPFAM" id="SSF50447">
    <property type="entry name" value="Translation proteins"/>
    <property type="match status" value="2"/>
</dbReference>
<dbReference type="PROSITE" id="PS51722">
    <property type="entry name" value="G_TR_2"/>
    <property type="match status" value="1"/>
</dbReference>
<dbReference type="PROSITE" id="PS01176">
    <property type="entry name" value="IF2"/>
    <property type="match status" value="1"/>
</dbReference>
<protein>
    <recommendedName>
        <fullName evidence="2">Translation initiation factor IF-2</fullName>
    </recommendedName>
</protein>
<gene>
    <name evidence="2" type="primary">infB</name>
    <name type="ordered locus">SCO5706</name>
    <name type="ORF">SC5H4.30</name>
    <name type="ORF">SC9F2.10c</name>
</gene>
<reference key="1">
    <citation type="journal article" date="2002" name="Nature">
        <title>Complete genome sequence of the model actinomycete Streptomyces coelicolor A3(2).</title>
        <authorList>
            <person name="Bentley S.D."/>
            <person name="Chater K.F."/>
            <person name="Cerdeno-Tarraga A.-M."/>
            <person name="Challis G.L."/>
            <person name="Thomson N.R."/>
            <person name="James K.D."/>
            <person name="Harris D.E."/>
            <person name="Quail M.A."/>
            <person name="Kieser H."/>
            <person name="Harper D."/>
            <person name="Bateman A."/>
            <person name="Brown S."/>
            <person name="Chandra G."/>
            <person name="Chen C.W."/>
            <person name="Collins M."/>
            <person name="Cronin A."/>
            <person name="Fraser A."/>
            <person name="Goble A."/>
            <person name="Hidalgo J."/>
            <person name="Hornsby T."/>
            <person name="Howarth S."/>
            <person name="Huang C.-H."/>
            <person name="Kieser T."/>
            <person name="Larke L."/>
            <person name="Murphy L.D."/>
            <person name="Oliver K."/>
            <person name="O'Neil S."/>
            <person name="Rabbinowitsch E."/>
            <person name="Rajandream M.A."/>
            <person name="Rutherford K.M."/>
            <person name="Rutter S."/>
            <person name="Seeger K."/>
            <person name="Saunders D."/>
            <person name="Sharp S."/>
            <person name="Squares R."/>
            <person name="Squares S."/>
            <person name="Taylor K."/>
            <person name="Warren T."/>
            <person name="Wietzorrek A."/>
            <person name="Woodward J.R."/>
            <person name="Barrell B.G."/>
            <person name="Parkhill J."/>
            <person name="Hopwood D.A."/>
        </authorList>
    </citation>
    <scope>NUCLEOTIDE SEQUENCE [LARGE SCALE GENOMIC DNA]</scope>
    <source>
        <strain>ATCC BAA-471 / A3(2) / M145</strain>
    </source>
</reference>
<comment type="function">
    <text evidence="2">One of the essential components for the initiation of protein synthesis. Protects formylmethionyl-tRNA from spontaneous hydrolysis and promotes its binding to the 30S ribosomal subunits. Also involved in the hydrolysis of GTP during the formation of the 70S ribosomal complex.</text>
</comment>
<comment type="subcellular location">
    <subcellularLocation>
        <location evidence="2">Cytoplasm</location>
    </subcellularLocation>
</comment>
<comment type="similarity">
    <text evidence="2">Belongs to the TRAFAC class translation factor GTPase superfamily. Classic translation factor GTPase family. IF-2 subfamily.</text>
</comment>
<organism>
    <name type="scientific">Streptomyces coelicolor (strain ATCC BAA-471 / A3(2) / M145)</name>
    <dbReference type="NCBI Taxonomy" id="100226"/>
    <lineage>
        <taxon>Bacteria</taxon>
        <taxon>Bacillati</taxon>
        <taxon>Actinomycetota</taxon>
        <taxon>Actinomycetes</taxon>
        <taxon>Kitasatosporales</taxon>
        <taxon>Streptomycetaceae</taxon>
        <taxon>Streptomyces</taxon>
        <taxon>Streptomyces albidoflavus group</taxon>
    </lineage>
</organism>
<sequence>MAKVRVYELAKEFGVESKVVMAKLQELGEFVRSASSTIEAPVVRKLTDAFQQGGGNGRSAGRPAAPKKAAPRPSAPSPAQAGPSQAAPAAGDRAAAPRPSAAPKAPAAQQPAAPSAPAPAPSQGPRPTPGPKPAPRPAPAAPEFTAPPAAPAAPSTPAPAPSGPKPGGARPGAPKPGGARPSGPGQDRGQQGGQGRPGGQRPGAPAQRPGGRPGGPRPGNNPFTSGGNAGMARPSAPRPQGGPRPGGPGGAPGGGPRPQGPGGQGGGPRPQAPGGNRPSPGSMPRPQGGGAGPRPGGGPRPNPGMMPQRPAAGPRPGPGGGGRGPGGAGRPGGGGGRPGGGGFAGRPGGGGGGRPGGGGGFAGRPGGGGGFGGGGGRPGFGGRPGGPGGRGGTQGAFGRPGGPARRGRKSKRQRRQEYEAMQAPSVGGVMLPRGNGETIRLSRGASLTDFAEKINANPASLVAVMMNLGEMVTATQSVSDETLHLLAGEMNYTVQIVSPEEEDRELLESFDLEFGEDEGSEEDLVVRPPVVTVMGHVDHGKTRLLDAIRKTNVIAGEAGGITQHIGAYQVATEVNDEERKITFIDTPGHEAFTAMRARGARSTDIAILVVAANDGVMPQTVEALNHAKAAEVPIVVAVNKIDVEGADPTKVRGQLTEYGLVAEEYGGDTMFVDISAKQGLHIDSLLEAVVLTADASLDLRANPVQDAQGISIESRLDRGRGAVATVLVQRGTLRVGDTMVVGDAYGRVRAMLDDNGNNVAEAGPSTPVQVLGLTNVPGAGDNFIVVEEDRTARQIAEKRAARERNAAFAKRTRRVSLEDLDKVLKAGEVQQLNLIIKGDASGSVEALESSLLQLDVGEEVDIRVLHRGVGAVTESDIDLAMGSDAIVIGFNVRAAGRAAQMAEREGVDVRYYSVIYQAIEEIEAALKGMLKPEYEEVELGTAEIREVFRSSKLGNIAGVLIRSGEVKRNTKARLLRDGKVIAENLNIEGLRRFKDDVTEIREGFEGGINLGNFNDIKVDDVIATYEMREKPRV</sequence>
<name>IF2_STRCO</name>
<keyword id="KW-0963">Cytoplasm</keyword>
<keyword id="KW-0342">GTP-binding</keyword>
<keyword id="KW-0396">Initiation factor</keyword>
<keyword id="KW-0547">Nucleotide-binding</keyword>
<keyword id="KW-0648">Protein biosynthesis</keyword>
<keyword id="KW-1185">Reference proteome</keyword>
<feature type="chain" id="PRO_0000137261" description="Translation initiation factor IF-2">
    <location>
        <begin position="1"/>
        <end position="1033"/>
    </location>
</feature>
<feature type="domain" description="tr-type G">
    <location>
        <begin position="526"/>
        <end position="698"/>
    </location>
</feature>
<feature type="region of interest" description="Disordered" evidence="3">
    <location>
        <begin position="49"/>
        <end position="432"/>
    </location>
</feature>
<feature type="region of interest" description="G1" evidence="1">
    <location>
        <begin position="535"/>
        <end position="542"/>
    </location>
</feature>
<feature type="region of interest" description="G2" evidence="1">
    <location>
        <begin position="560"/>
        <end position="564"/>
    </location>
</feature>
<feature type="region of interest" description="G3" evidence="1">
    <location>
        <begin position="585"/>
        <end position="588"/>
    </location>
</feature>
<feature type="region of interest" description="G4" evidence="1">
    <location>
        <begin position="639"/>
        <end position="642"/>
    </location>
</feature>
<feature type="region of interest" description="G5" evidence="1">
    <location>
        <begin position="675"/>
        <end position="677"/>
    </location>
</feature>
<feature type="compositionally biased region" description="Low complexity" evidence="3">
    <location>
        <begin position="59"/>
        <end position="113"/>
    </location>
</feature>
<feature type="compositionally biased region" description="Pro residues" evidence="3">
    <location>
        <begin position="114"/>
        <end position="140"/>
    </location>
</feature>
<feature type="compositionally biased region" description="Pro residues" evidence="3">
    <location>
        <begin position="148"/>
        <end position="164"/>
    </location>
</feature>
<feature type="compositionally biased region" description="Low complexity" evidence="3">
    <location>
        <begin position="171"/>
        <end position="189"/>
    </location>
</feature>
<feature type="compositionally biased region" description="Gly residues" evidence="3">
    <location>
        <begin position="190"/>
        <end position="201"/>
    </location>
</feature>
<feature type="compositionally biased region" description="Pro residues" evidence="3">
    <location>
        <begin position="236"/>
        <end position="246"/>
    </location>
</feature>
<feature type="compositionally biased region" description="Gly residues" evidence="3">
    <location>
        <begin position="247"/>
        <end position="268"/>
    </location>
</feature>
<feature type="compositionally biased region" description="Low complexity" evidence="3">
    <location>
        <begin position="305"/>
        <end position="314"/>
    </location>
</feature>
<feature type="compositionally biased region" description="Gly residues" evidence="3">
    <location>
        <begin position="318"/>
        <end position="401"/>
    </location>
</feature>
<feature type="compositionally biased region" description="Basic residues" evidence="3">
    <location>
        <begin position="405"/>
        <end position="414"/>
    </location>
</feature>
<feature type="binding site" evidence="2">
    <location>
        <begin position="535"/>
        <end position="542"/>
    </location>
    <ligand>
        <name>GTP</name>
        <dbReference type="ChEBI" id="CHEBI:37565"/>
    </ligand>
</feature>
<feature type="binding site" evidence="2">
    <location>
        <begin position="585"/>
        <end position="589"/>
    </location>
    <ligand>
        <name>GTP</name>
        <dbReference type="ChEBI" id="CHEBI:37565"/>
    </ligand>
</feature>
<feature type="binding site" evidence="2">
    <location>
        <begin position="639"/>
        <end position="642"/>
    </location>
    <ligand>
        <name>GTP</name>
        <dbReference type="ChEBI" id="CHEBI:37565"/>
    </ligand>
</feature>
<proteinExistence type="inferred from homology"/>
<accession>Q8CJQ8</accession>
<evidence type="ECO:0000250" key="1"/>
<evidence type="ECO:0000255" key="2">
    <source>
        <dbReference type="HAMAP-Rule" id="MF_00100"/>
    </source>
</evidence>
<evidence type="ECO:0000256" key="3">
    <source>
        <dbReference type="SAM" id="MobiDB-lite"/>
    </source>
</evidence>